<proteinExistence type="evidence at transcript level"/>
<keyword id="KW-0175">Coiled coil</keyword>
<keyword id="KW-0227">DNA damage</keyword>
<keyword id="KW-0235">DNA replication</keyword>
<keyword id="KW-0238">DNA-binding</keyword>
<keyword id="KW-0479">Metal-binding</keyword>
<keyword id="KW-0539">Nucleus</keyword>
<keyword id="KW-1185">Reference proteome</keyword>
<keyword id="KW-0862">Zinc</keyword>
<keyword id="KW-0863">Zinc-finger</keyword>
<organism>
    <name type="scientific">Xenopus tropicalis</name>
    <name type="common">Western clawed frog</name>
    <name type="synonym">Silurana tropicalis</name>
    <dbReference type="NCBI Taxonomy" id="8364"/>
    <lineage>
        <taxon>Eukaryota</taxon>
        <taxon>Metazoa</taxon>
        <taxon>Chordata</taxon>
        <taxon>Craniata</taxon>
        <taxon>Vertebrata</taxon>
        <taxon>Euteleostomi</taxon>
        <taxon>Amphibia</taxon>
        <taxon>Batrachia</taxon>
        <taxon>Anura</taxon>
        <taxon>Pipoidea</taxon>
        <taxon>Pipidae</taxon>
        <taxon>Xenopodinae</taxon>
        <taxon>Xenopus</taxon>
        <taxon>Silurana</taxon>
    </lineage>
</organism>
<accession>Q28E45</accession>
<feature type="chain" id="PRO_0000278324" description="Protein MCM10 homolog">
    <location>
        <begin position="1"/>
        <end position="845"/>
    </location>
</feature>
<feature type="region of interest" description="N-terminal domain" evidence="1">
    <location>
        <begin position="1"/>
        <end position="145"/>
    </location>
</feature>
<feature type="region of interest" description="Disordered" evidence="5">
    <location>
        <begin position="15"/>
        <end position="65"/>
    </location>
</feature>
<feature type="region of interest" description="Disordered" evidence="5">
    <location>
        <begin position="78"/>
        <end position="218"/>
    </location>
</feature>
<feature type="region of interest" description="OB-fold domain" evidence="1">
    <location>
        <begin position="217"/>
        <end position="367"/>
    </location>
</feature>
<feature type="region of interest" description="Zinc finger-like 1">
    <location>
        <begin position="368"/>
        <end position="393"/>
    </location>
</feature>
<feature type="region of interest" description="Disordered" evidence="5">
    <location>
        <begin position="564"/>
        <end position="586"/>
    </location>
</feature>
<feature type="region of interest" description="Disordered" evidence="5">
    <location>
        <begin position="643"/>
        <end position="688"/>
    </location>
</feature>
<feature type="region of interest" description="Zinc finger-like 2" evidence="1">
    <location>
        <begin position="754"/>
        <end position="773"/>
    </location>
</feature>
<feature type="region of interest" description="Zinc finger-like 3" evidence="1">
    <location>
        <begin position="787"/>
        <end position="807"/>
    </location>
</feature>
<feature type="coiled-coil region" evidence="4">
    <location>
        <begin position="93"/>
        <end position="131"/>
    </location>
</feature>
<feature type="compositionally biased region" description="Low complexity" evidence="5">
    <location>
        <begin position="15"/>
        <end position="26"/>
    </location>
</feature>
<feature type="compositionally biased region" description="Acidic residues" evidence="5">
    <location>
        <begin position="33"/>
        <end position="47"/>
    </location>
</feature>
<feature type="compositionally biased region" description="Acidic residues" evidence="5">
    <location>
        <begin position="55"/>
        <end position="65"/>
    </location>
</feature>
<feature type="compositionally biased region" description="Basic and acidic residues" evidence="5">
    <location>
        <begin position="98"/>
        <end position="116"/>
    </location>
</feature>
<feature type="compositionally biased region" description="Low complexity" evidence="5">
    <location>
        <begin position="120"/>
        <end position="130"/>
    </location>
</feature>
<feature type="compositionally biased region" description="Polar residues" evidence="5">
    <location>
        <begin position="179"/>
        <end position="211"/>
    </location>
</feature>
<feature type="compositionally biased region" description="Low complexity" evidence="5">
    <location>
        <begin position="570"/>
        <end position="580"/>
    </location>
</feature>
<dbReference type="EMBL" id="CR848457">
    <property type="protein sequence ID" value="CAJ82204.1"/>
    <property type="molecule type" value="mRNA"/>
</dbReference>
<dbReference type="RefSeq" id="NP_001016909.1">
    <property type="nucleotide sequence ID" value="NM_001016909.2"/>
</dbReference>
<dbReference type="RefSeq" id="XP_012814512.1">
    <property type="nucleotide sequence ID" value="XM_012959058.3"/>
</dbReference>
<dbReference type="SMR" id="Q28E45"/>
<dbReference type="FunCoup" id="Q28E45">
    <property type="interactions" value="2712"/>
</dbReference>
<dbReference type="STRING" id="8364.ENSXETP00000002975"/>
<dbReference type="PaxDb" id="8364-ENSXETP00000019989"/>
<dbReference type="GeneID" id="549663"/>
<dbReference type="KEGG" id="xtr:549663"/>
<dbReference type="AGR" id="Xenbase:XB-GENE-1015391"/>
<dbReference type="CTD" id="55388"/>
<dbReference type="Xenbase" id="XB-GENE-1015391">
    <property type="gene designation" value="mcm10"/>
</dbReference>
<dbReference type="eggNOG" id="KOG3056">
    <property type="taxonomic scope" value="Eukaryota"/>
</dbReference>
<dbReference type="HOGENOM" id="CLU_014680_0_0_1"/>
<dbReference type="InParanoid" id="Q28E45"/>
<dbReference type="OMA" id="YKMPCKA"/>
<dbReference type="OrthoDB" id="273123at2759"/>
<dbReference type="PhylomeDB" id="Q28E45"/>
<dbReference type="TreeFam" id="TF313330"/>
<dbReference type="Reactome" id="R-XTR-68962">
    <property type="pathway name" value="Activation of the pre-replicative complex"/>
</dbReference>
<dbReference type="Proteomes" id="UP000008143">
    <property type="component" value="Chromosome 3"/>
</dbReference>
<dbReference type="Bgee" id="ENSXETG00000009113">
    <property type="expression patterns" value="Expressed in ovary and 9 other cell types or tissues"/>
</dbReference>
<dbReference type="ExpressionAtlas" id="Q28E45">
    <property type="expression patterns" value="differential"/>
</dbReference>
<dbReference type="GO" id="GO:0005634">
    <property type="term" value="C:nucleus"/>
    <property type="evidence" value="ECO:0000250"/>
    <property type="project" value="UniProtKB"/>
</dbReference>
<dbReference type="GO" id="GO:0003690">
    <property type="term" value="F:double-stranded DNA binding"/>
    <property type="evidence" value="ECO:0007669"/>
    <property type="project" value="InterPro"/>
</dbReference>
<dbReference type="GO" id="GO:0003697">
    <property type="term" value="F:single-stranded DNA binding"/>
    <property type="evidence" value="ECO:0007669"/>
    <property type="project" value="InterPro"/>
</dbReference>
<dbReference type="GO" id="GO:0008270">
    <property type="term" value="F:zinc ion binding"/>
    <property type="evidence" value="ECO:0007669"/>
    <property type="project" value="UniProtKB-KW"/>
</dbReference>
<dbReference type="GO" id="GO:0006974">
    <property type="term" value="P:DNA damage response"/>
    <property type="evidence" value="ECO:0007669"/>
    <property type="project" value="UniProtKB-KW"/>
</dbReference>
<dbReference type="GO" id="GO:0006270">
    <property type="term" value="P:DNA replication initiation"/>
    <property type="evidence" value="ECO:0007669"/>
    <property type="project" value="InterPro"/>
</dbReference>
<dbReference type="FunFam" id="1.20.5.420:FF:000017">
    <property type="entry name" value="Maltose/maltodextrin-binding periplasmic protein"/>
    <property type="match status" value="1"/>
</dbReference>
<dbReference type="FunFam" id="2.40.50.140:FF:000167">
    <property type="entry name" value="Minichromosome maintenance 10 replication initiation factor"/>
    <property type="match status" value="1"/>
</dbReference>
<dbReference type="Gene3D" id="1.20.5.420">
    <property type="entry name" value="Immunoglobulin FC, subunit C"/>
    <property type="match status" value="1"/>
</dbReference>
<dbReference type="Gene3D" id="2.40.50.140">
    <property type="entry name" value="Nucleic acid-binding proteins"/>
    <property type="match status" value="1"/>
</dbReference>
<dbReference type="InterPro" id="IPR040184">
    <property type="entry name" value="Mcm10"/>
</dbReference>
<dbReference type="InterPro" id="IPR055065">
    <property type="entry name" value="MCM10_OB"/>
</dbReference>
<dbReference type="InterPro" id="IPR012340">
    <property type="entry name" value="NA-bd_OB-fold"/>
</dbReference>
<dbReference type="InterPro" id="IPR015411">
    <property type="entry name" value="Rep_factor_Mcm10_C"/>
</dbReference>
<dbReference type="InterPro" id="IPR015408">
    <property type="entry name" value="Znf_Mcm10/DnaG"/>
</dbReference>
<dbReference type="InterPro" id="IPR056791">
    <property type="entry name" value="Znf_Mcm10_C"/>
</dbReference>
<dbReference type="PANTHER" id="PTHR13454">
    <property type="entry name" value="PROTEIN MCM10 HOMOLOG"/>
    <property type="match status" value="1"/>
</dbReference>
<dbReference type="PANTHER" id="PTHR13454:SF11">
    <property type="entry name" value="PROTEIN MCM10 HOMOLOG"/>
    <property type="match status" value="1"/>
</dbReference>
<dbReference type="Pfam" id="PF09332">
    <property type="entry name" value="Mcm10"/>
    <property type="match status" value="1"/>
</dbReference>
<dbReference type="Pfam" id="PF22379">
    <property type="entry name" value="MCM10_OB"/>
    <property type="match status" value="1"/>
</dbReference>
<dbReference type="Pfam" id="PF24863">
    <property type="entry name" value="zf-CCCH_Mcm10"/>
    <property type="match status" value="1"/>
</dbReference>
<dbReference type="Pfam" id="PF09329">
    <property type="entry name" value="zf-primase"/>
    <property type="match status" value="1"/>
</dbReference>
<dbReference type="SMART" id="SM01280">
    <property type="entry name" value="Mcm10"/>
    <property type="match status" value="1"/>
</dbReference>
<reference key="1">
    <citation type="submission" date="2006-10" db="EMBL/GenBank/DDBJ databases">
        <authorList>
            <consortium name="Sanger Xenopus tropicalis EST/cDNA project"/>
        </authorList>
    </citation>
    <scope>NUCLEOTIDE SEQUENCE [LARGE SCALE MRNA]</scope>
    <source>
        <tissue>Egg</tissue>
    </source>
</reference>
<evidence type="ECO:0000250" key="1"/>
<evidence type="ECO:0000250" key="2">
    <source>
        <dbReference type="UniProtKB" id="Q5EAW4"/>
    </source>
</evidence>
<evidence type="ECO:0000250" key="3">
    <source>
        <dbReference type="UniProtKB" id="Q7L590"/>
    </source>
</evidence>
<evidence type="ECO:0000255" key="4"/>
<evidence type="ECO:0000256" key="5">
    <source>
        <dbReference type="SAM" id="MobiDB-lite"/>
    </source>
</evidence>
<evidence type="ECO:0000305" key="6"/>
<protein>
    <recommendedName>
        <fullName>Protein MCM10 homolog</fullName>
    </recommendedName>
</protein>
<sequence>MEAVDADLELLTSLLEENEAAESNSVESHEASSELDEYDELFDGDEDGSYHESDNGTEEQTVDGVEENFDTLFGDIDDINEEETVAPDTKKQSSVCQDKSKHELEDELRKMQEQMRKLQKQLQQTALAKTSSPGNPMKSPDNKLLLSGKTFQSGPLLERSLTVPKANLQDTPKRKQNLQDKSPLQKQMTSFLSPPDKSSTRPVSSTATQPVLNPVRSPVGQQYPVEKFSGLRLRKPRVSSSEMERKMNGRKLIRLAQLQNKIVTEKLEDEDWVTFGVIVKKITPQSSNNGKTFSIWRLNDLKNLDKYVSLFLFGDVHKEHWKTDQGTVIGLLNANPMKPKEGTDEVCLSVDNPQKVLLMGDAVDLGTCKARKKNGDPCTQMVNLNDCEYCQYHVQAQYKKVSSKRADLQSSYSGHVPKKMARGGNGLRERLCQDGFHYGGVSSMAYATTLASTTAPKKTVQSTLSNMVVRGAEAIALEARQQIAAARKNMVQSDEFKELMTLPTPGALNLKKHFSGVPTQANEKGGQPFQSISASALLKQQKQQMLGARKKRAEEIQKRFLESTEKSEKSSTLVSSERSVFQSPKQGAEFPNAQKMATPKLGRGFAEGEDVLFFDISPPAAKSNTSAQATKLAAIQKLQAKGQTLTKADPNSIKRKRSSSAEELVAQRVASHAPASTKSPDENEPAMKKHREQLAYLESKEFQKILNAKSKHTGILKEAEAEIQERYFDPLVKKEQLEEKMRSIREQECRVVTCKTCKYTHFKPKETCVSENHDFHWHNGVKRFFKCACGNRTISLDRLPKKHCSTCGLFKWERDGMLKEKTGPKIAGETLLPRGEEHGKFLNSH</sequence>
<gene>
    <name type="primary">mcm10</name>
    <name type="ORF">TEgg053h10.1</name>
</gene>
<comment type="function">
    <text evidence="3">Acts as a replication initiation factor that brings together the MCM2-7 helicase and the DNA polymerase alpha/primase complex in order to initiate DNA replication. Additionally, plays a role in preventing DNA damage during replication (By similarity).</text>
</comment>
<comment type="subunit">
    <text evidence="2">Self-associates.</text>
</comment>
<comment type="subcellular location">
    <subcellularLocation>
        <location evidence="2">Nucleus</location>
    </subcellularLocation>
</comment>
<comment type="domain">
    <text evidence="2">Each zinc finger-like domain binds a zinc ion and is involved in both ssDNA and dsDNA binding, as is the OB-fold domain.</text>
</comment>
<comment type="domain">
    <text evidence="2">The N-terminal domain mediates homodimerization.</text>
</comment>
<comment type="similarity">
    <text evidence="6">Belongs to the MCM10 family.</text>
</comment>
<name>MCM10_XENTR</name>